<proteinExistence type="evidence at protein level"/>
<dbReference type="EMBL" id="CP000077">
    <property type="protein sequence ID" value="AAY80524.1"/>
    <property type="molecule type" value="Genomic_DNA"/>
</dbReference>
<dbReference type="RefSeq" id="WP_011278026.1">
    <property type="nucleotide sequence ID" value="NC_007181.1"/>
</dbReference>
<dbReference type="SMR" id="Q4J9K6"/>
<dbReference type="IntAct" id="Q4J9K6">
    <property type="interactions" value="1"/>
</dbReference>
<dbReference type="MINT" id="Q4J9K6"/>
<dbReference type="STRING" id="330779.Saci_1177"/>
<dbReference type="GeneID" id="14551681"/>
<dbReference type="KEGG" id="sai:Saci_1177"/>
<dbReference type="PATRIC" id="fig|330779.12.peg.1141"/>
<dbReference type="eggNOG" id="arCOG07206">
    <property type="taxonomic scope" value="Archaea"/>
</dbReference>
<dbReference type="HOGENOM" id="CLU_1096748_0_0_2"/>
<dbReference type="Proteomes" id="UP000001018">
    <property type="component" value="Chromosome"/>
</dbReference>
<dbReference type="GO" id="GO:0097589">
    <property type="term" value="C:archaeal-type flagellum"/>
    <property type="evidence" value="ECO:0007669"/>
    <property type="project" value="UniProtKB-SubCell"/>
</dbReference>
<dbReference type="GO" id="GO:0005886">
    <property type="term" value="C:plasma membrane"/>
    <property type="evidence" value="ECO:0007669"/>
    <property type="project" value="UniProtKB-SubCell"/>
</dbReference>
<dbReference type="InterPro" id="IPR056538">
    <property type="entry name" value="ArlX"/>
</dbReference>
<dbReference type="Pfam" id="PF24151">
    <property type="entry name" value="ArlX"/>
    <property type="match status" value="1"/>
</dbReference>
<sequence length="250" mass="28056">MAIQDLLQSSLFIILIGVGIPIAAFLEILFRVILPKTKRVQTQQSPQNISQEQRFPTQQKPANDETSKYSSDSIEKALKDVLGKMDKKENELLTNITNSFNEMKKLIENLNSAVEELALSVKASESDSSSPFNTIIQQEEEHVSREISTVSQLVGSNNPNNVNLTWFIKSCVLLEIMEYDEEKIKQLYELGYVSSDDMFTILRILSFIKNRKITAKELASIAANIAESYSSLTPEIKKYIMILEGGGVNG</sequence>
<keyword id="KW-0974">Archaeal flagellum</keyword>
<keyword id="KW-1209">Archaeal flagellum biogenesis</keyword>
<keyword id="KW-1003">Cell membrane</keyword>
<keyword id="KW-0472">Membrane</keyword>
<keyword id="KW-1185">Reference proteome</keyword>
<keyword id="KW-0812">Transmembrane</keyword>
<keyword id="KW-1133">Transmembrane helix</keyword>
<protein>
    <recommendedName>
        <fullName evidence="9">Archaeal flagellar motor scaffold protein FlaX</fullName>
    </recommendedName>
</protein>
<accession>Q4J9K6</accession>
<name>FLAX_SULAC</name>
<organism>
    <name type="scientific">Sulfolobus acidocaldarius (strain ATCC 33909 / DSM 639 / JCM 8929 / NBRC 15157 / NCIMB 11770)</name>
    <dbReference type="NCBI Taxonomy" id="330779"/>
    <lineage>
        <taxon>Archaea</taxon>
        <taxon>Thermoproteota</taxon>
        <taxon>Thermoprotei</taxon>
        <taxon>Sulfolobales</taxon>
        <taxon>Sulfolobaceae</taxon>
        <taxon>Sulfolobus</taxon>
    </lineage>
</organism>
<gene>
    <name evidence="8" type="primary">flaX</name>
    <name evidence="11" type="ordered locus">Saci_1177</name>
</gene>
<feature type="chain" id="PRO_0000460732" description="Archaeal flagellar motor scaffold protein FlaX">
    <location>
        <begin position="1"/>
        <end position="250"/>
    </location>
</feature>
<feature type="topological domain" description="Extracellular" evidence="10">
    <location>
        <begin position="1"/>
        <end position="9"/>
    </location>
</feature>
<feature type="transmembrane region" description="Helical" evidence="1">
    <location>
        <begin position="10"/>
        <end position="30"/>
    </location>
</feature>
<feature type="topological domain" description="Cytoplasmic" evidence="10">
    <location>
        <begin position="31"/>
        <end position="250"/>
    </location>
</feature>
<feature type="region of interest" description="Disordered" evidence="2">
    <location>
        <begin position="42"/>
        <end position="72"/>
    </location>
</feature>
<feature type="compositionally biased region" description="Polar residues" evidence="2">
    <location>
        <begin position="42"/>
        <end position="61"/>
    </location>
</feature>
<feature type="compositionally biased region" description="Basic and acidic residues" evidence="2">
    <location>
        <begin position="62"/>
        <end position="72"/>
    </location>
</feature>
<evidence type="ECO:0000255" key="1"/>
<evidence type="ECO:0000256" key="2">
    <source>
        <dbReference type="SAM" id="MobiDB-lite"/>
    </source>
</evidence>
<evidence type="ECO:0000269" key="3">
    <source>
    </source>
</evidence>
<evidence type="ECO:0000269" key="4">
    <source>
    </source>
</evidence>
<evidence type="ECO:0000269" key="5">
    <source>
    </source>
</evidence>
<evidence type="ECO:0000269" key="6">
    <source>
    </source>
</evidence>
<evidence type="ECO:0000269" key="7">
    <source>
    </source>
</evidence>
<evidence type="ECO:0000303" key="8">
    <source>
    </source>
</evidence>
<evidence type="ECO:0000305" key="9"/>
<evidence type="ECO:0000305" key="10">
    <source>
    </source>
</evidence>
<evidence type="ECO:0000312" key="11">
    <source>
        <dbReference type="EMBL" id="AAY80524.1"/>
    </source>
</evidence>
<reference key="1">
    <citation type="journal article" date="2005" name="J. Bacteriol.">
        <title>The genome of Sulfolobus acidocaldarius, a model organism of the Crenarchaeota.</title>
        <authorList>
            <person name="Chen L."/>
            <person name="Bruegger K."/>
            <person name="Skovgaard M."/>
            <person name="Redder P."/>
            <person name="She Q."/>
            <person name="Torarinsson E."/>
            <person name="Greve B."/>
            <person name="Awayez M."/>
            <person name="Zibat A."/>
            <person name="Klenk H.-P."/>
            <person name="Garrett R.A."/>
        </authorList>
    </citation>
    <scope>NUCLEOTIDE SEQUENCE [LARGE SCALE GENOMIC DNA]</scope>
    <source>
        <strain>ATCC 33909 / DSM 639 / JCM 8929 / NBRC 15157 / NCIMB 11770</strain>
    </source>
</reference>
<reference key="2">
    <citation type="journal article" date="2012" name="Mol. Microbiol.">
        <title>Molecular analysis of the crenarchaeal flagellum.</title>
        <authorList>
            <person name="Lassak K."/>
            <person name="Neiner T."/>
            <person name="Ghosh A."/>
            <person name="Klingl A."/>
            <person name="Wirth R."/>
            <person name="Albers S.V."/>
        </authorList>
    </citation>
    <scope>FUNCTION</scope>
    <scope>ACTIVITY REGULATION</scope>
    <scope>SUBUNIT</scope>
    <scope>INDUCTION</scope>
    <scope>DISRUPTION PHENOTYPE</scope>
    <source>
        <strain>ATCC 33909 / DSM 639 / JCM 8929 / NBRC 15157 / NCIMB 11770</strain>
    </source>
</reference>
<reference key="3">
    <citation type="journal article" date="2012" name="J. Biol. Chem.">
        <title>FlaX, a unique component of the crenarchaeal archaellum, forms oligomeric ring-shaped structures and interacts with the motor ATPase FlaI.</title>
        <authorList>
            <person name="Banerjee A."/>
            <person name="Ghosh A."/>
            <person name="Mills D.J."/>
            <person name="Kahnt J."/>
            <person name="Vonck J."/>
            <person name="Albers S.V."/>
        </authorList>
    </citation>
    <scope>FUNCTION</scope>
    <scope>SUBUNIT</scope>
    <scope>INTERACTION WITH FLAI</scope>
    <scope>SUBCELLULAR LOCATION</scope>
    <scope>DOMAIN</scope>
    <source>
        <strain>ATCC 33909 / DSM 639 / JCM 8929 / NBRC 15157 / NCIMB 11770</strain>
    </source>
</reference>
<reference key="4">
    <citation type="journal article" date="2013" name="FEBS J.">
        <title>Insights into subunit interactions in the Sulfolobus acidocaldarius archaellum cytoplasmic complex.</title>
        <authorList>
            <person name="Banerjee A."/>
            <person name="Neiner T."/>
            <person name="Tripp P."/>
            <person name="Albers S.V."/>
        </authorList>
    </citation>
    <scope>FUNCTION</scope>
    <scope>SUBUNIT</scope>
    <scope>INTERACTION WITH FLAH AND FLAI</scope>
    <scope>SUBCELLULAR LOCATION</scope>
</reference>
<reference key="5">
    <citation type="journal article" date="2016" name="Mol. Microbiol.">
        <title>The nucleotide-dependent interaction of FlaH and FlaI is essential for assembly and function of the archaellum motor.</title>
        <authorList>
            <person name="Chaudhury P."/>
            <person name="Neiner T."/>
            <person name="D'Imprima E."/>
            <person name="Banerjee A."/>
            <person name="Reindl S."/>
            <person name="Ghosh A."/>
            <person name="Arvai A.S."/>
            <person name="Mills D.J."/>
            <person name="van der Does C."/>
            <person name="Tainer J.A."/>
            <person name="Vonck J."/>
            <person name="Albers S.V."/>
        </authorList>
    </citation>
    <scope>FUNCTION</scope>
    <scope>INTERACTION WITH FLAH</scope>
    <scope>DOMAIN</scope>
    <source>
        <strain>ATCC 33909 / DSM 639 / JCM 8929 / NBRC 15157 / NCIMB 11770</strain>
    </source>
</reference>
<reference key="6">
    <citation type="journal article" date="2018" name="Methods Mol. Biol.">
        <title>Expression, Purification, and Assembly of Archaellum Subcomplexes of Sulfolobus acidocaldarius.</title>
        <authorList>
            <person name="Chaudhury P."/>
            <person name="Tripp P."/>
            <person name="Albers S.V."/>
        </authorList>
    </citation>
    <scope>INTERACTION WITH FLAH</scope>
</reference>
<comment type="function">
    <text evidence="3 4 5 6">Component of the archaellum (PubMed:22081969, PubMed:23129770, PubMed:24103130, PubMed:26508112). FlaX, FlaH and FlaI form the core cytoplasmic motor complex of the crenarchaeal archaellum (PubMed:24103130, PubMed:26508112). FlaX forms a ring that may act as a membrane-bound cytoplasmic scaffold that guides the assembly of the archaellum motor complex (PubMed:24103130). Is essential for archaellum assembly (PubMed:23129770).</text>
</comment>
<comment type="activity regulation">
    <text evidence="3">The presence of the flagellar core components FlaH, FlaI and FlaJ seems to be crucial for the stability of FlaX.</text>
</comment>
<comment type="subunit">
    <text evidence="3 4 5 6 7">The S.acidocaldarius archaellum assembly machinery and its filament consist of seven proteins (FlaB, FlaF, FlaG, FlaH, FlaI, FlaJ and FlaX) (PubMed:22081969). FlaX assembles into ring-shaped oligomers (PubMed:23129770). Interacts directly with FlaH and the motor ATPase FlaI (PubMed:23129770, PubMed:24103130, PubMed:26508112, PubMed:29605923).</text>
</comment>
<comment type="interaction">
    <interactant intactId="EBI-8759763">
        <id>Q4J9K6</id>
    </interactant>
    <interactant intactId="EBI-8759747">
        <id>Q4J9L0</id>
        <label>flaI</label>
    </interactant>
    <organismsDiffer>false</organismsDiffer>
    <experiments>5</experiments>
</comment>
<comment type="subcellular location">
    <subcellularLocation>
        <location evidence="4 5">Archaeal flagellum</location>
    </subcellularLocation>
    <subcellularLocation>
        <location evidence="10">Cell membrane</location>
        <topology evidence="1">Single-pass membrane protein</topology>
        <orientation evidence="10">Cytoplasmic side</orientation>
    </subcellularLocation>
</comment>
<comment type="induction">
    <text evidence="3">Part of the fla operon, which encodes the seven fla genes essential for crenarchaeal flagellum assembly and function (PubMed:22081969). Expression is induced by tryptone starvation (PubMed:22081969).</text>
</comment>
<comment type="domain">
    <text evidence="4 6">The C terminal region is involved in the oligomerization, but is also essential for interaction with FlaH and FlaI.</text>
</comment>
<comment type="disruption phenotype">
    <text evidence="3">The deletion mutant lacks flagella and is non-motile.</text>
</comment>